<name>Y346_METJA</name>
<accession>Q57792</accession>
<dbReference type="EMBL" id="L77117">
    <property type="protein sequence ID" value="AAB98336.1"/>
    <property type="molecule type" value="Genomic_DNA"/>
</dbReference>
<dbReference type="PIR" id="B64343">
    <property type="entry name" value="B64343"/>
</dbReference>
<dbReference type="STRING" id="243232.MJ_0346"/>
<dbReference type="PaxDb" id="243232-MJ_0346"/>
<dbReference type="EnsemblBacteria" id="AAB98336">
    <property type="protein sequence ID" value="AAB98336"/>
    <property type="gene ID" value="MJ_0346"/>
</dbReference>
<dbReference type="KEGG" id="mja:MJ_0346"/>
<dbReference type="HOGENOM" id="CLU_2285051_0_0_2"/>
<dbReference type="InParanoid" id="Q57792"/>
<dbReference type="Proteomes" id="UP000000805">
    <property type="component" value="Chromosome"/>
</dbReference>
<protein>
    <recommendedName>
        <fullName>Uncharacterized protein MJ0346</fullName>
    </recommendedName>
</protein>
<reference key="1">
    <citation type="journal article" date="1996" name="Science">
        <title>Complete genome sequence of the methanogenic archaeon, Methanococcus jannaschii.</title>
        <authorList>
            <person name="Bult C.J."/>
            <person name="White O."/>
            <person name="Olsen G.J."/>
            <person name="Zhou L."/>
            <person name="Fleischmann R.D."/>
            <person name="Sutton G.G."/>
            <person name="Blake J.A."/>
            <person name="FitzGerald L.M."/>
            <person name="Clayton R.A."/>
            <person name="Gocayne J.D."/>
            <person name="Kerlavage A.R."/>
            <person name="Dougherty B.A."/>
            <person name="Tomb J.-F."/>
            <person name="Adams M.D."/>
            <person name="Reich C.I."/>
            <person name="Overbeek R."/>
            <person name="Kirkness E.F."/>
            <person name="Weinstock K.G."/>
            <person name="Merrick J.M."/>
            <person name="Glodek A."/>
            <person name="Scott J.L."/>
            <person name="Geoghagen N.S.M."/>
            <person name="Weidman J.F."/>
            <person name="Fuhrmann J.L."/>
            <person name="Nguyen D."/>
            <person name="Utterback T.R."/>
            <person name="Kelley J.M."/>
            <person name="Peterson J.D."/>
            <person name="Sadow P.W."/>
            <person name="Hanna M.C."/>
            <person name="Cotton M.D."/>
            <person name="Roberts K.M."/>
            <person name="Hurst M.A."/>
            <person name="Kaine B.P."/>
            <person name="Borodovsky M."/>
            <person name="Klenk H.-P."/>
            <person name="Fraser C.M."/>
            <person name="Smith H.O."/>
            <person name="Woese C.R."/>
            <person name="Venter J.C."/>
        </authorList>
    </citation>
    <scope>NUCLEOTIDE SEQUENCE [LARGE SCALE GENOMIC DNA]</scope>
    <source>
        <strain>ATCC 43067 / DSM 2661 / JAL-1 / JCM 10045 / NBRC 100440</strain>
    </source>
</reference>
<feature type="chain" id="PRO_0000106816" description="Uncharacterized protein MJ0346">
    <location>
        <begin position="1"/>
        <end position="101"/>
    </location>
</feature>
<organism>
    <name type="scientific">Methanocaldococcus jannaschii (strain ATCC 43067 / DSM 2661 / JAL-1 / JCM 10045 / NBRC 100440)</name>
    <name type="common">Methanococcus jannaschii</name>
    <dbReference type="NCBI Taxonomy" id="243232"/>
    <lineage>
        <taxon>Archaea</taxon>
        <taxon>Methanobacteriati</taxon>
        <taxon>Methanobacteriota</taxon>
        <taxon>Methanomada group</taxon>
        <taxon>Methanococci</taxon>
        <taxon>Methanococcales</taxon>
        <taxon>Methanocaldococcaceae</taxon>
        <taxon>Methanocaldococcus</taxon>
    </lineage>
</organism>
<gene>
    <name type="ordered locus">MJ0346</name>
</gene>
<proteinExistence type="predicted"/>
<sequence length="101" mass="11750">MEDMITLTDERKTVKFENLPEIYVRVHDEAKGLVLTVKNPYDTDVYAKVYYAPDGENYDTVTSEVVKYDYQAQKTELIPIKHPYMKISFDSAVSGWVSYIK</sequence>
<keyword id="KW-1185">Reference proteome</keyword>